<dbReference type="EMBL" id="AK291603">
    <property type="protein sequence ID" value="BAF84292.1"/>
    <property type="molecule type" value="mRNA"/>
</dbReference>
<dbReference type="EMBL" id="AK298046">
    <property type="protein sequence ID" value="BAH12711.1"/>
    <property type="molecule type" value="mRNA"/>
</dbReference>
<dbReference type="EMBL" id="AK291809">
    <property type="protein sequence ID" value="BAF84498.1"/>
    <property type="molecule type" value="mRNA"/>
</dbReference>
<dbReference type="EMBL" id="AK292790">
    <property type="protein sequence ID" value="BAF85479.1"/>
    <property type="molecule type" value="mRNA"/>
</dbReference>
<dbReference type="EMBL" id="AK300718">
    <property type="protein sequence ID" value="BAH13333.1"/>
    <property type="molecule type" value="mRNA"/>
</dbReference>
<dbReference type="EMBL" id="AK316266">
    <property type="protein sequence ID" value="BAH14637.1"/>
    <property type="molecule type" value="mRNA"/>
</dbReference>
<dbReference type="EMBL" id="AL162424">
    <property type="status" value="NOT_ANNOTATED_CDS"/>
    <property type="molecule type" value="Genomic_DNA"/>
</dbReference>
<dbReference type="EMBL" id="CH471090">
    <property type="protein sequence ID" value="EAW87525.1"/>
    <property type="molecule type" value="Genomic_DNA"/>
</dbReference>
<dbReference type="EMBL" id="BC013049">
    <property type="protein sequence ID" value="AAH13049.1"/>
    <property type="molecule type" value="mRNA"/>
</dbReference>
<dbReference type="EMBL" id="BC053604">
    <property type="protein sequence ID" value="AAH53604.1"/>
    <property type="molecule type" value="mRNA"/>
</dbReference>
<dbReference type="CCDS" id="CCDS48013.1">
    <molecule id="Q96E11-2"/>
</dbReference>
<dbReference type="CCDS" id="CCDS55336.1">
    <molecule id="Q96E11-8"/>
</dbReference>
<dbReference type="CCDS" id="CCDS6840.1">
    <molecule id="Q96E11-1"/>
</dbReference>
<dbReference type="CCDS" id="CCDS87684.1">
    <molecule id="Q96E11-3"/>
</dbReference>
<dbReference type="RefSeq" id="NP_001166983.1">
    <molecule id="Q96E11-8"/>
    <property type="nucleotide sequence ID" value="NM_001173512.3"/>
</dbReference>
<dbReference type="RefSeq" id="NP_001333270.1">
    <molecule id="Q96E11-1"/>
    <property type="nucleotide sequence ID" value="NM_001346341.2"/>
</dbReference>
<dbReference type="RefSeq" id="NP_001333272.1">
    <molecule id="Q96E11-3"/>
    <property type="nucleotide sequence ID" value="NM_001346343.2"/>
</dbReference>
<dbReference type="RefSeq" id="NP_620132.1">
    <molecule id="Q96E11-1"/>
    <property type="nucleotide sequence ID" value="NM_138777.5"/>
</dbReference>
<dbReference type="RefSeq" id="NP_954646.1">
    <molecule id="Q96E11-2"/>
    <property type="nucleotide sequence ID" value="NM_199177.4"/>
</dbReference>
<dbReference type="RefSeq" id="XP_047280024.1">
    <molecule id="Q96E11-5"/>
    <property type="nucleotide sequence ID" value="XM_047424068.1"/>
</dbReference>
<dbReference type="PDB" id="6NU2">
    <property type="method" value="EM"/>
    <property type="resolution" value="3.90 A"/>
    <property type="chains" value="z=59-262"/>
</dbReference>
<dbReference type="PDB" id="6ZS9">
    <property type="method" value="EM"/>
    <property type="resolution" value="4.00 A"/>
    <property type="chains" value="A5=71-262"/>
</dbReference>
<dbReference type="PDB" id="7L08">
    <property type="method" value="EM"/>
    <property type="resolution" value="3.49 A"/>
    <property type="chains" value="z=59-262"/>
</dbReference>
<dbReference type="PDB" id="7L20">
    <property type="method" value="EM"/>
    <property type="resolution" value="3.15 A"/>
    <property type="chains" value="z=59-262"/>
</dbReference>
<dbReference type="PDB" id="7NSH">
    <property type="method" value="EM"/>
    <property type="resolution" value="3.20 A"/>
    <property type="chains" value="BG=26-262"/>
</dbReference>
<dbReference type="PDB" id="7NSI">
    <property type="method" value="EM"/>
    <property type="resolution" value="4.60 A"/>
    <property type="chains" value="BG=26-262"/>
</dbReference>
<dbReference type="PDBsum" id="6NU2"/>
<dbReference type="PDBsum" id="6ZS9"/>
<dbReference type="PDBsum" id="7L08"/>
<dbReference type="PDBsum" id="7L20"/>
<dbReference type="PDBsum" id="7NSH"/>
<dbReference type="PDBsum" id="7NSI"/>
<dbReference type="EMDB" id="EMD-0514"/>
<dbReference type="EMDB" id="EMD-11390"/>
<dbReference type="EMDB" id="EMD-12567"/>
<dbReference type="EMDB" id="EMD-12568"/>
<dbReference type="EMDB" id="EMD-23096"/>
<dbReference type="EMDB" id="EMD-23121"/>
<dbReference type="SMR" id="Q96E11"/>
<dbReference type="BioGRID" id="124944">
    <property type="interactions" value="326"/>
</dbReference>
<dbReference type="FunCoup" id="Q96E11">
    <property type="interactions" value="1830"/>
</dbReference>
<dbReference type="IntAct" id="Q96E11">
    <property type="interactions" value="48"/>
</dbReference>
<dbReference type="MINT" id="Q96E11"/>
<dbReference type="STRING" id="9606.ENSP00000343867"/>
<dbReference type="GlyGen" id="Q96E11">
    <property type="glycosylation" value="1 site, 1 O-linked glycan (1 site)"/>
</dbReference>
<dbReference type="iPTMnet" id="Q96E11"/>
<dbReference type="MetOSite" id="Q96E11"/>
<dbReference type="PhosphoSitePlus" id="Q96E11"/>
<dbReference type="SwissPalm" id="Q96E11"/>
<dbReference type="BioMuta" id="MRRF"/>
<dbReference type="DMDM" id="62901043"/>
<dbReference type="jPOST" id="Q96E11"/>
<dbReference type="MassIVE" id="Q96E11"/>
<dbReference type="PaxDb" id="9606-ENSP00000343867"/>
<dbReference type="PeptideAtlas" id="Q96E11"/>
<dbReference type="ProteomicsDB" id="76354">
    <molecule id="Q96E11-1"/>
</dbReference>
<dbReference type="ProteomicsDB" id="76355">
    <molecule id="Q96E11-2"/>
</dbReference>
<dbReference type="ProteomicsDB" id="76356">
    <molecule id="Q96E11-3"/>
</dbReference>
<dbReference type="ProteomicsDB" id="76357">
    <molecule id="Q96E11-4"/>
</dbReference>
<dbReference type="ProteomicsDB" id="76358">
    <molecule id="Q96E11-5"/>
</dbReference>
<dbReference type="ProteomicsDB" id="76359">
    <molecule id="Q96E11-6"/>
</dbReference>
<dbReference type="ProteomicsDB" id="76360">
    <molecule id="Q96E11-7"/>
</dbReference>
<dbReference type="ProteomicsDB" id="76361">
    <molecule id="Q96E11-8"/>
</dbReference>
<dbReference type="Pumba" id="Q96E11"/>
<dbReference type="TopDownProteomics" id="Q96E11-3">
    <molecule id="Q96E11-3"/>
</dbReference>
<dbReference type="Antibodypedia" id="30275">
    <property type="antibodies" value="297 antibodies from 26 providers"/>
</dbReference>
<dbReference type="DNASU" id="92399"/>
<dbReference type="Ensembl" id="ENST00000297908.7">
    <molecule id="Q96E11-8"/>
    <property type="protein sequence ID" value="ENSP00000297908.3"/>
    <property type="gene ID" value="ENSG00000148187.18"/>
</dbReference>
<dbReference type="Ensembl" id="ENST00000344641.8">
    <molecule id="Q96E11-1"/>
    <property type="protein sequence ID" value="ENSP00000343867.3"/>
    <property type="gene ID" value="ENSG00000148187.18"/>
</dbReference>
<dbReference type="Ensembl" id="ENST00000373723.9">
    <molecule id="Q96E11-2"/>
    <property type="protein sequence ID" value="ENSP00000362828.4"/>
    <property type="gene ID" value="ENSG00000148187.18"/>
</dbReference>
<dbReference type="Ensembl" id="ENST00000373729.5">
    <molecule id="Q96E11-3"/>
    <property type="protein sequence ID" value="ENSP00000362834.1"/>
    <property type="gene ID" value="ENSG00000148187.18"/>
</dbReference>
<dbReference type="Ensembl" id="ENST00000394315.3">
    <molecule id="Q96E11-2"/>
    <property type="protein sequence ID" value="ENSP00000377850.3"/>
    <property type="gene ID" value="ENSG00000148187.18"/>
</dbReference>
<dbReference type="Ensembl" id="ENST00000467864.5">
    <molecule id="Q96E11-4"/>
    <property type="protein sequence ID" value="ENSP00000433288.1"/>
    <property type="gene ID" value="ENSG00000148187.18"/>
</dbReference>
<dbReference type="Ensembl" id="ENST00000470366.5">
    <molecule id="Q96E11-6"/>
    <property type="protein sequence ID" value="ENSP00000434807.1"/>
    <property type="gene ID" value="ENSG00000148187.18"/>
</dbReference>
<dbReference type="Ensembl" id="ENST00000489572.5">
    <molecule id="Q96E11-6"/>
    <property type="protein sequence ID" value="ENSP00000436360.1"/>
    <property type="gene ID" value="ENSG00000148187.18"/>
</dbReference>
<dbReference type="GeneID" id="92399"/>
<dbReference type="KEGG" id="hsa:92399"/>
<dbReference type="MANE-Select" id="ENST00000344641.8">
    <property type="protein sequence ID" value="ENSP00000343867.3"/>
    <property type="RefSeq nucleotide sequence ID" value="NM_138777.5"/>
    <property type="RefSeq protein sequence ID" value="NP_620132.1"/>
</dbReference>
<dbReference type="UCSC" id="uc010mwa.4">
    <molecule id="Q96E11-1"/>
    <property type="organism name" value="human"/>
</dbReference>
<dbReference type="AGR" id="HGNC:7234"/>
<dbReference type="CTD" id="92399"/>
<dbReference type="DisGeNET" id="92399"/>
<dbReference type="GeneCards" id="MRRF"/>
<dbReference type="HGNC" id="HGNC:7234">
    <property type="gene designation" value="MRRF"/>
</dbReference>
<dbReference type="HPA" id="ENSG00000148187">
    <property type="expression patterns" value="Low tissue specificity"/>
</dbReference>
<dbReference type="MalaCards" id="MRRF"/>
<dbReference type="MIM" id="604602">
    <property type="type" value="gene"/>
</dbReference>
<dbReference type="neXtProt" id="NX_Q96E11"/>
<dbReference type="OpenTargets" id="ENSG00000148187"/>
<dbReference type="PharmGKB" id="PA31029"/>
<dbReference type="VEuPathDB" id="HostDB:ENSG00000148187"/>
<dbReference type="eggNOG" id="KOG4759">
    <property type="taxonomic scope" value="Eukaryota"/>
</dbReference>
<dbReference type="GeneTree" id="ENSGT00390000005084"/>
<dbReference type="HOGENOM" id="CLU_073981_4_1_1"/>
<dbReference type="InParanoid" id="Q96E11"/>
<dbReference type="OMA" id="FNPMNNG"/>
<dbReference type="OrthoDB" id="407355at2759"/>
<dbReference type="PAN-GO" id="Q96E11">
    <property type="GO annotations" value="3 GO annotations based on evolutionary models"/>
</dbReference>
<dbReference type="PhylomeDB" id="Q96E11"/>
<dbReference type="TreeFam" id="TF323691"/>
<dbReference type="PathwayCommons" id="Q96E11"/>
<dbReference type="Reactome" id="R-HSA-5419276">
    <property type="pathway name" value="Mitochondrial translation termination"/>
</dbReference>
<dbReference type="SignaLink" id="Q96E11"/>
<dbReference type="BioGRID-ORCS" id="92399">
    <property type="hits" value="38 hits in 1124 CRISPR screens"/>
</dbReference>
<dbReference type="CD-CODE" id="91857CE7">
    <property type="entry name" value="Nucleolus"/>
</dbReference>
<dbReference type="ChiTaRS" id="MRRF">
    <property type="organism name" value="human"/>
</dbReference>
<dbReference type="GenomeRNAi" id="92399"/>
<dbReference type="Pharos" id="Q96E11">
    <property type="development level" value="Tbio"/>
</dbReference>
<dbReference type="PRO" id="PR:Q96E11"/>
<dbReference type="Proteomes" id="UP000005640">
    <property type="component" value="Chromosome 9"/>
</dbReference>
<dbReference type="RNAct" id="Q96E11">
    <property type="molecule type" value="protein"/>
</dbReference>
<dbReference type="Bgee" id="ENSG00000148187">
    <property type="expression patterns" value="Expressed in rectum and 148 other cell types or tissues"/>
</dbReference>
<dbReference type="ExpressionAtlas" id="Q96E11">
    <property type="expression patterns" value="baseline and differential"/>
</dbReference>
<dbReference type="GO" id="GO:0005759">
    <property type="term" value="C:mitochondrial matrix"/>
    <property type="evidence" value="ECO:0000304"/>
    <property type="project" value="Reactome"/>
</dbReference>
<dbReference type="GO" id="GO:0005739">
    <property type="term" value="C:mitochondrion"/>
    <property type="evidence" value="ECO:0000314"/>
    <property type="project" value="UniProtKB"/>
</dbReference>
<dbReference type="GO" id="GO:0043023">
    <property type="term" value="F:ribosomal large subunit binding"/>
    <property type="evidence" value="ECO:0000318"/>
    <property type="project" value="GO_Central"/>
</dbReference>
<dbReference type="GO" id="GO:0032790">
    <property type="term" value="P:ribosome disassembly"/>
    <property type="evidence" value="ECO:0000314"/>
    <property type="project" value="UniProtKB"/>
</dbReference>
<dbReference type="GO" id="GO:0006412">
    <property type="term" value="P:translation"/>
    <property type="evidence" value="ECO:0000318"/>
    <property type="project" value="GO_Central"/>
</dbReference>
<dbReference type="FunFam" id="3.30.1360.40:FF:000007">
    <property type="entry name" value="ribosome-recycling factor, mitochondrial isoform X1"/>
    <property type="match status" value="1"/>
</dbReference>
<dbReference type="FunFam" id="1.10.132.20:FF:000003">
    <property type="entry name" value="ribosome-recycling factor, mitochondrial isoform X2"/>
    <property type="match status" value="1"/>
</dbReference>
<dbReference type="Gene3D" id="3.30.1360.40">
    <property type="match status" value="1"/>
</dbReference>
<dbReference type="Gene3D" id="1.10.132.20">
    <property type="entry name" value="Ribosome-recycling factor"/>
    <property type="match status" value="1"/>
</dbReference>
<dbReference type="InterPro" id="IPR002661">
    <property type="entry name" value="Ribosome_recyc_fac"/>
</dbReference>
<dbReference type="InterPro" id="IPR023584">
    <property type="entry name" value="Ribosome_recyc_fac_dom"/>
</dbReference>
<dbReference type="InterPro" id="IPR036191">
    <property type="entry name" value="RRF_sf"/>
</dbReference>
<dbReference type="PANTHER" id="PTHR20982">
    <property type="entry name" value="RIBOSOME RECYCLING FACTOR"/>
    <property type="match status" value="1"/>
</dbReference>
<dbReference type="PANTHER" id="PTHR20982:SF10">
    <property type="entry name" value="RIBOSOME-RECYCLING FACTOR, MITOCHONDRIAL"/>
    <property type="match status" value="1"/>
</dbReference>
<dbReference type="Pfam" id="PF01765">
    <property type="entry name" value="RRF"/>
    <property type="match status" value="1"/>
</dbReference>
<dbReference type="SUPFAM" id="SSF55194">
    <property type="entry name" value="Ribosome recycling factor, RRF"/>
    <property type="match status" value="1"/>
</dbReference>
<keyword id="KW-0002">3D-structure</keyword>
<keyword id="KW-0025">Alternative splicing</keyword>
<keyword id="KW-0496">Mitochondrion</keyword>
<keyword id="KW-0648">Protein biosynthesis</keyword>
<keyword id="KW-1267">Proteomics identification</keyword>
<keyword id="KW-1185">Reference proteome</keyword>
<keyword id="KW-0809">Transit peptide</keyword>
<name>RRFM_HUMAN</name>
<sequence>MALGLKCFRMVHPTFRNYLAASIRPVSEVTLKTVHERQHGHRQYMAYSAVPVRHFATKKAKAKGKGQSQTRVNINAALVEDIINLEEVNEEMKSVIEALKDNFNKTLNIRTSPGSLDKIAVVTADGKLALNQISQISMKSPQLILVNMASFPECTAAAIKAIRESGMNLNPEVEGTLIRVPIPQVTREHREMLVKLAKQNTNKAKDSLRKVRTNSMNKLKKSKDTVSEDTIRLIEKQISQMADDTVAELDRHLAVKTKELLG</sequence>
<organism>
    <name type="scientific">Homo sapiens</name>
    <name type="common">Human</name>
    <dbReference type="NCBI Taxonomy" id="9606"/>
    <lineage>
        <taxon>Eukaryota</taxon>
        <taxon>Metazoa</taxon>
        <taxon>Chordata</taxon>
        <taxon>Craniata</taxon>
        <taxon>Vertebrata</taxon>
        <taxon>Euteleostomi</taxon>
        <taxon>Mammalia</taxon>
        <taxon>Eutheria</taxon>
        <taxon>Euarchontoglires</taxon>
        <taxon>Primates</taxon>
        <taxon>Haplorrhini</taxon>
        <taxon>Catarrhini</taxon>
        <taxon>Hominidae</taxon>
        <taxon>Homo</taxon>
    </lineage>
</organism>
<evidence type="ECO:0000255" key="1"/>
<evidence type="ECO:0000269" key="2">
    <source>
    </source>
</evidence>
<evidence type="ECO:0000269" key="3">
    <source>
    </source>
</evidence>
<evidence type="ECO:0000269" key="4">
    <source>
    </source>
</evidence>
<evidence type="ECO:0000303" key="5">
    <source>
    </source>
</evidence>
<evidence type="ECO:0000303" key="6">
    <source>
    </source>
</evidence>
<evidence type="ECO:0000303" key="7">
    <source>
    </source>
</evidence>
<evidence type="ECO:0000305" key="8"/>
<evidence type="ECO:0000312" key="9">
    <source>
        <dbReference type="HGNC" id="HGNC:7234"/>
    </source>
</evidence>
<evidence type="ECO:0007744" key="10">
    <source>
        <dbReference type="PDB" id="7NSH"/>
    </source>
</evidence>
<evidence type="ECO:0007744" key="11">
    <source>
        <dbReference type="PDB" id="7NSI"/>
    </source>
</evidence>
<feature type="transit peptide" description="Mitochondrion" evidence="1">
    <location>
        <begin position="1"/>
        <end position="55"/>
    </location>
</feature>
<feature type="chain" id="PRO_0000031080" description="Ribosome-recycling factor, mitochondrial">
    <location>
        <begin position="56"/>
        <end position="262"/>
    </location>
</feature>
<feature type="splice variant" id="VSP_013483" description="In isoform 3 and isoform 7." evidence="8">
    <location>
        <begin position="1"/>
        <end position="44"/>
    </location>
</feature>
<feature type="splice variant" id="VSP_042019" description="In isoform 8." evidence="5">
    <location>
        <begin position="62"/>
        <end position="113"/>
    </location>
</feature>
<feature type="splice variant" id="VSP_013484" description="In isoform 4." evidence="8">
    <original>CTAAAIKAIRESGMNLNPEVEGTLIRVPIPQVTREHREMLVKLAKQNTNKAKDSLRKVRTNSMNKLKKSKDTVSEDTIRLIEKQISQMADDTVAELDRHLAVKTKELLG</original>
    <variation>ELAWIRSLRVPGIRSHLYHQLAV</variation>
    <location>
        <begin position="154"/>
        <end position="262"/>
    </location>
</feature>
<feature type="splice variant" id="VSP_013485" description="In isoform 6 and isoform 7." evidence="5">
    <original>CTAAAIKAIRESGMN</original>
    <variation>TMKQIKQYFNGPNVA</variation>
    <location>
        <begin position="154"/>
        <end position="168"/>
    </location>
</feature>
<feature type="splice variant" id="VSP_013486" description="In isoform 5." evidence="5">
    <original>CTAAA</original>
    <variation>VRWPC</variation>
    <location>
        <begin position="154"/>
        <end position="158"/>
    </location>
</feature>
<feature type="splice variant" id="VSP_013487" description="In isoform 5." evidence="5">
    <location>
        <begin position="159"/>
        <end position="262"/>
    </location>
</feature>
<feature type="splice variant" id="VSP_013488" description="In isoform 6 and isoform 7." evidence="5">
    <location>
        <begin position="169"/>
        <end position="262"/>
    </location>
</feature>
<feature type="splice variant" id="VSP_013489" description="In isoform 2." evidence="6">
    <original>VTREHREMLVKLAKQNT</original>
    <variation>SAKWPMTQWQNWTGIWQ</variation>
    <location>
        <begin position="185"/>
        <end position="201"/>
    </location>
</feature>
<feature type="splice variant" id="VSP_013490" description="In isoform 2." evidence="6">
    <location>
        <begin position="202"/>
        <end position="262"/>
    </location>
</feature>
<feature type="sequence variant" id="VAR_051885" description="In dbSNP:rs2297483.">
    <original>M</original>
    <variation>V</variation>
    <location>
        <position position="216"/>
    </location>
</feature>
<reference key="1">
    <citation type="journal article" date="2004" name="Nat. Genet.">
        <title>Complete sequencing and characterization of 21,243 full-length human cDNAs.</title>
        <authorList>
            <person name="Ota T."/>
            <person name="Suzuki Y."/>
            <person name="Nishikawa T."/>
            <person name="Otsuki T."/>
            <person name="Sugiyama T."/>
            <person name="Irie R."/>
            <person name="Wakamatsu A."/>
            <person name="Hayashi K."/>
            <person name="Sato H."/>
            <person name="Nagai K."/>
            <person name="Kimura K."/>
            <person name="Makita H."/>
            <person name="Sekine M."/>
            <person name="Obayashi M."/>
            <person name="Nishi T."/>
            <person name="Shibahara T."/>
            <person name="Tanaka T."/>
            <person name="Ishii S."/>
            <person name="Yamamoto J."/>
            <person name="Saito K."/>
            <person name="Kawai Y."/>
            <person name="Isono Y."/>
            <person name="Nakamura Y."/>
            <person name="Nagahari K."/>
            <person name="Murakami K."/>
            <person name="Yasuda T."/>
            <person name="Iwayanagi T."/>
            <person name="Wagatsuma M."/>
            <person name="Shiratori A."/>
            <person name="Sudo H."/>
            <person name="Hosoiri T."/>
            <person name="Kaku Y."/>
            <person name="Kodaira H."/>
            <person name="Kondo H."/>
            <person name="Sugawara M."/>
            <person name="Takahashi M."/>
            <person name="Kanda K."/>
            <person name="Yokoi T."/>
            <person name="Furuya T."/>
            <person name="Kikkawa E."/>
            <person name="Omura Y."/>
            <person name="Abe K."/>
            <person name="Kamihara K."/>
            <person name="Katsuta N."/>
            <person name="Sato K."/>
            <person name="Tanikawa M."/>
            <person name="Yamazaki M."/>
            <person name="Ninomiya K."/>
            <person name="Ishibashi T."/>
            <person name="Yamashita H."/>
            <person name="Murakawa K."/>
            <person name="Fujimori K."/>
            <person name="Tanai H."/>
            <person name="Kimata M."/>
            <person name="Watanabe M."/>
            <person name="Hiraoka S."/>
            <person name="Chiba Y."/>
            <person name="Ishida S."/>
            <person name="Ono Y."/>
            <person name="Takiguchi S."/>
            <person name="Watanabe S."/>
            <person name="Yosida M."/>
            <person name="Hotuta T."/>
            <person name="Kusano J."/>
            <person name="Kanehori K."/>
            <person name="Takahashi-Fujii A."/>
            <person name="Hara H."/>
            <person name="Tanase T.-O."/>
            <person name="Nomura Y."/>
            <person name="Togiya S."/>
            <person name="Komai F."/>
            <person name="Hara R."/>
            <person name="Takeuchi K."/>
            <person name="Arita M."/>
            <person name="Imose N."/>
            <person name="Musashino K."/>
            <person name="Yuuki H."/>
            <person name="Oshima A."/>
            <person name="Sasaki N."/>
            <person name="Aotsuka S."/>
            <person name="Yoshikawa Y."/>
            <person name="Matsunawa H."/>
            <person name="Ichihara T."/>
            <person name="Shiohata N."/>
            <person name="Sano S."/>
            <person name="Moriya S."/>
            <person name="Momiyama H."/>
            <person name="Satoh N."/>
            <person name="Takami S."/>
            <person name="Terashima Y."/>
            <person name="Suzuki O."/>
            <person name="Nakagawa S."/>
            <person name="Senoh A."/>
            <person name="Mizoguchi H."/>
            <person name="Goto Y."/>
            <person name="Shimizu F."/>
            <person name="Wakebe H."/>
            <person name="Hishigaki H."/>
            <person name="Watanabe T."/>
            <person name="Sugiyama A."/>
            <person name="Takemoto M."/>
            <person name="Kawakami B."/>
            <person name="Yamazaki M."/>
            <person name="Watanabe K."/>
            <person name="Kumagai A."/>
            <person name="Itakura S."/>
            <person name="Fukuzumi Y."/>
            <person name="Fujimori Y."/>
            <person name="Komiyama M."/>
            <person name="Tashiro H."/>
            <person name="Tanigami A."/>
            <person name="Fujiwara T."/>
            <person name="Ono T."/>
            <person name="Yamada K."/>
            <person name="Fujii Y."/>
            <person name="Ozaki K."/>
            <person name="Hirao M."/>
            <person name="Ohmori Y."/>
            <person name="Kawabata A."/>
            <person name="Hikiji T."/>
            <person name="Kobatake N."/>
            <person name="Inagaki H."/>
            <person name="Ikema Y."/>
            <person name="Okamoto S."/>
            <person name="Okitani R."/>
            <person name="Kawakami T."/>
            <person name="Noguchi S."/>
            <person name="Itoh T."/>
            <person name="Shigeta K."/>
            <person name="Senba T."/>
            <person name="Matsumura K."/>
            <person name="Nakajima Y."/>
            <person name="Mizuno T."/>
            <person name="Morinaga M."/>
            <person name="Sasaki M."/>
            <person name="Togashi T."/>
            <person name="Oyama M."/>
            <person name="Hata H."/>
            <person name="Watanabe M."/>
            <person name="Komatsu T."/>
            <person name="Mizushima-Sugano J."/>
            <person name="Satoh T."/>
            <person name="Shirai Y."/>
            <person name="Takahashi Y."/>
            <person name="Nakagawa K."/>
            <person name="Okumura K."/>
            <person name="Nagase T."/>
            <person name="Nomura N."/>
            <person name="Kikuchi H."/>
            <person name="Masuho Y."/>
            <person name="Yamashita R."/>
            <person name="Nakai K."/>
            <person name="Yada T."/>
            <person name="Nakamura Y."/>
            <person name="Ohara O."/>
            <person name="Isogai T."/>
            <person name="Sugano S."/>
        </authorList>
    </citation>
    <scope>NUCLEOTIDE SEQUENCE [LARGE SCALE MRNA] (ISOFORMS 1; 5; 6 AND 8)</scope>
    <source>
        <tissue>Brain</tissue>
        <tissue>Lung</tissue>
        <tissue>Placenta</tissue>
        <tissue>Prostate</tissue>
        <tissue>Skeletal muscle</tissue>
        <tissue>Trachea</tissue>
    </source>
</reference>
<reference key="2">
    <citation type="journal article" date="2004" name="Nature">
        <title>DNA sequence and analysis of human chromosome 9.</title>
        <authorList>
            <person name="Humphray S.J."/>
            <person name="Oliver K."/>
            <person name="Hunt A.R."/>
            <person name="Plumb R.W."/>
            <person name="Loveland J.E."/>
            <person name="Howe K.L."/>
            <person name="Andrews T.D."/>
            <person name="Searle S."/>
            <person name="Hunt S.E."/>
            <person name="Scott C.E."/>
            <person name="Jones M.C."/>
            <person name="Ainscough R."/>
            <person name="Almeida J.P."/>
            <person name="Ambrose K.D."/>
            <person name="Ashwell R.I.S."/>
            <person name="Babbage A.K."/>
            <person name="Babbage S."/>
            <person name="Bagguley C.L."/>
            <person name="Bailey J."/>
            <person name="Banerjee R."/>
            <person name="Barker D.J."/>
            <person name="Barlow K.F."/>
            <person name="Bates K."/>
            <person name="Beasley H."/>
            <person name="Beasley O."/>
            <person name="Bird C.P."/>
            <person name="Bray-Allen S."/>
            <person name="Brown A.J."/>
            <person name="Brown J.Y."/>
            <person name="Burford D."/>
            <person name="Burrill W."/>
            <person name="Burton J."/>
            <person name="Carder C."/>
            <person name="Carter N.P."/>
            <person name="Chapman J.C."/>
            <person name="Chen Y."/>
            <person name="Clarke G."/>
            <person name="Clark S.Y."/>
            <person name="Clee C.M."/>
            <person name="Clegg S."/>
            <person name="Collier R.E."/>
            <person name="Corby N."/>
            <person name="Crosier M."/>
            <person name="Cummings A.T."/>
            <person name="Davies J."/>
            <person name="Dhami P."/>
            <person name="Dunn M."/>
            <person name="Dutta I."/>
            <person name="Dyer L.W."/>
            <person name="Earthrowl M.E."/>
            <person name="Faulkner L."/>
            <person name="Fleming C.J."/>
            <person name="Frankish A."/>
            <person name="Frankland J.A."/>
            <person name="French L."/>
            <person name="Fricker D.G."/>
            <person name="Garner P."/>
            <person name="Garnett J."/>
            <person name="Ghori J."/>
            <person name="Gilbert J.G.R."/>
            <person name="Glison C."/>
            <person name="Grafham D.V."/>
            <person name="Gribble S."/>
            <person name="Griffiths C."/>
            <person name="Griffiths-Jones S."/>
            <person name="Grocock R."/>
            <person name="Guy J."/>
            <person name="Hall R.E."/>
            <person name="Hammond S."/>
            <person name="Harley J.L."/>
            <person name="Harrison E.S.I."/>
            <person name="Hart E.A."/>
            <person name="Heath P.D."/>
            <person name="Henderson C.D."/>
            <person name="Hopkins B.L."/>
            <person name="Howard P.J."/>
            <person name="Howden P.J."/>
            <person name="Huckle E."/>
            <person name="Johnson C."/>
            <person name="Johnson D."/>
            <person name="Joy A.A."/>
            <person name="Kay M."/>
            <person name="Keenan S."/>
            <person name="Kershaw J.K."/>
            <person name="Kimberley A.M."/>
            <person name="King A."/>
            <person name="Knights A."/>
            <person name="Laird G.K."/>
            <person name="Langford C."/>
            <person name="Lawlor S."/>
            <person name="Leongamornlert D.A."/>
            <person name="Leversha M."/>
            <person name="Lloyd C."/>
            <person name="Lloyd D.M."/>
            <person name="Lovell J."/>
            <person name="Martin S."/>
            <person name="Mashreghi-Mohammadi M."/>
            <person name="Matthews L."/>
            <person name="McLaren S."/>
            <person name="McLay K.E."/>
            <person name="McMurray A."/>
            <person name="Milne S."/>
            <person name="Nickerson T."/>
            <person name="Nisbett J."/>
            <person name="Nordsiek G."/>
            <person name="Pearce A.V."/>
            <person name="Peck A.I."/>
            <person name="Porter K.M."/>
            <person name="Pandian R."/>
            <person name="Pelan S."/>
            <person name="Phillimore B."/>
            <person name="Povey S."/>
            <person name="Ramsey Y."/>
            <person name="Rand V."/>
            <person name="Scharfe M."/>
            <person name="Sehra H.K."/>
            <person name="Shownkeen R."/>
            <person name="Sims S.K."/>
            <person name="Skuce C.D."/>
            <person name="Smith M."/>
            <person name="Steward C.A."/>
            <person name="Swarbreck D."/>
            <person name="Sycamore N."/>
            <person name="Tester J."/>
            <person name="Thorpe A."/>
            <person name="Tracey A."/>
            <person name="Tromans A."/>
            <person name="Thomas D.W."/>
            <person name="Wall M."/>
            <person name="Wallis J.M."/>
            <person name="West A.P."/>
            <person name="Whitehead S.L."/>
            <person name="Willey D.L."/>
            <person name="Williams S.A."/>
            <person name="Wilming L."/>
            <person name="Wray P.W."/>
            <person name="Young L."/>
            <person name="Ashurst J.L."/>
            <person name="Coulson A."/>
            <person name="Blocker H."/>
            <person name="Durbin R.M."/>
            <person name="Sulston J.E."/>
            <person name="Hubbard T."/>
            <person name="Jackson M.J."/>
            <person name="Bentley D.R."/>
            <person name="Beck S."/>
            <person name="Rogers J."/>
            <person name="Dunham I."/>
        </authorList>
    </citation>
    <scope>NUCLEOTIDE SEQUENCE [LARGE SCALE GENOMIC DNA] (ISOFORMS 1; 3; 4; 5; 6 AND 7)</scope>
</reference>
<reference key="3">
    <citation type="submission" date="2005-07" db="EMBL/GenBank/DDBJ databases">
        <authorList>
            <person name="Mural R.J."/>
            <person name="Istrail S."/>
            <person name="Sutton G.G."/>
            <person name="Florea L."/>
            <person name="Halpern A.L."/>
            <person name="Mobarry C.M."/>
            <person name="Lippert R."/>
            <person name="Walenz B."/>
            <person name="Shatkay H."/>
            <person name="Dew I."/>
            <person name="Miller J.R."/>
            <person name="Flanigan M.J."/>
            <person name="Edwards N.J."/>
            <person name="Bolanos R."/>
            <person name="Fasulo D."/>
            <person name="Halldorsson B.V."/>
            <person name="Hannenhalli S."/>
            <person name="Turner R."/>
            <person name="Yooseph S."/>
            <person name="Lu F."/>
            <person name="Nusskern D.R."/>
            <person name="Shue B.C."/>
            <person name="Zheng X.H."/>
            <person name="Zhong F."/>
            <person name="Delcher A.L."/>
            <person name="Huson D.H."/>
            <person name="Kravitz S.A."/>
            <person name="Mouchard L."/>
            <person name="Reinert K."/>
            <person name="Remington K.A."/>
            <person name="Clark A.G."/>
            <person name="Waterman M.S."/>
            <person name="Eichler E.E."/>
            <person name="Adams M.D."/>
            <person name="Hunkapiller M.W."/>
            <person name="Myers E.W."/>
            <person name="Venter J.C."/>
        </authorList>
    </citation>
    <scope>NUCLEOTIDE SEQUENCE [LARGE SCALE GENOMIC DNA]</scope>
</reference>
<reference key="4">
    <citation type="journal article" date="2004" name="Genome Res.">
        <title>The status, quality, and expansion of the NIH full-length cDNA project: the Mammalian Gene Collection (MGC).</title>
        <authorList>
            <consortium name="The MGC Project Team"/>
        </authorList>
    </citation>
    <scope>NUCLEOTIDE SEQUENCE [LARGE SCALE MRNA] (ISOFORMS 1 AND 2)</scope>
    <source>
        <tissue>Lung</tissue>
    </source>
</reference>
<reference key="5">
    <citation type="journal article" date="1998" name="Biochim. Biophys. Acta">
        <title>Identification and cloning of human mitochondrial translational release factor 1 and the ribosome recycling factor.</title>
        <authorList>
            <person name="Zhang Y."/>
            <person name="Spremulli L.L."/>
        </authorList>
    </citation>
    <scope>IDENTIFICATION</scope>
</reference>
<reference key="6">
    <citation type="journal article" date="2008" name="Nucleic Acids Res.">
        <title>The human mitochondrial ribosome recycling factor is essential for cell viability.</title>
        <authorList>
            <person name="Rorbach J."/>
            <person name="Richter R."/>
            <person name="Wessels H.J."/>
            <person name="Wydro M."/>
            <person name="Pekalski M."/>
            <person name="Farhoud M."/>
            <person name="Kuehl I."/>
            <person name="Gaisne M."/>
            <person name="Bonnefoy N."/>
            <person name="Smeitink J.A."/>
            <person name="Lightowlers R.N."/>
            <person name="Chrzanowska-Lightowlers Z.M."/>
        </authorList>
    </citation>
    <scope>SUBCELLULAR LOCATION</scope>
</reference>
<reference key="7">
    <citation type="journal article" date="2009" name="Mol. Cell">
        <title>EF-G2mt is an exclusive recycling factor in mammalian mitochondrial protein synthesis.</title>
        <authorList>
            <person name="Tsuboi M."/>
            <person name="Morita H."/>
            <person name="Nozaki Y."/>
            <person name="Akama K."/>
            <person name="Ueda T."/>
            <person name="Ito K."/>
            <person name="Nierhaus K.H."/>
            <person name="Takeuchi N."/>
        </authorList>
    </citation>
    <scope>FUNCTION</scope>
</reference>
<reference key="8">
    <citation type="journal article" date="2011" name="BMC Syst. Biol.">
        <title>Initial characterization of the human central proteome.</title>
        <authorList>
            <person name="Burkard T.R."/>
            <person name="Planyavsky M."/>
            <person name="Kaupe I."/>
            <person name="Breitwieser F.P."/>
            <person name="Buerckstuemmer T."/>
            <person name="Bennett K.L."/>
            <person name="Superti-Furga G."/>
            <person name="Colinge J."/>
        </authorList>
    </citation>
    <scope>IDENTIFICATION BY MASS SPECTROMETRY [LARGE SCALE ANALYSIS]</scope>
</reference>
<reference key="9">
    <citation type="journal article" date="2015" name="Proteomics">
        <title>N-terminome analysis of the human mitochondrial proteome.</title>
        <authorList>
            <person name="Vaca Jacome A.S."/>
            <person name="Rabilloud T."/>
            <person name="Schaeffer-Reiss C."/>
            <person name="Rompais M."/>
            <person name="Ayoub D."/>
            <person name="Lane L."/>
            <person name="Bairoch A."/>
            <person name="Van Dorsselaer A."/>
            <person name="Carapito C."/>
        </authorList>
    </citation>
    <scope>IDENTIFICATION BY MASS SPECTROMETRY [LARGE SCALE ANALYSIS]</scope>
</reference>
<reference evidence="10 11" key="10">
    <citation type="journal article" date="2021" name="Mol. Cell">
        <title>Structural basis of translation termination, rescue, and recycling in mammalian mitochondria.</title>
        <authorList>
            <person name="Kummer E."/>
            <person name="Schubert K.N."/>
            <person name="Schoenhut T."/>
            <person name="Scaiola A."/>
            <person name="Ban N."/>
        </authorList>
    </citation>
    <scope>STRUCTURE BY ELECTRON MICROSCOPY (3.20 ANGSTROMS) OF 26-262 IN COMPLEX WITH GFM2 AND MITOCHONDRIAL RIBOSOME</scope>
    <scope>FUNCTION</scope>
</reference>
<gene>
    <name evidence="9" type="primary">MRRF</name>
</gene>
<proteinExistence type="evidence at protein level"/>
<protein>
    <recommendedName>
        <fullName>Ribosome-recycling factor, mitochondrial</fullName>
        <shortName>RRF</shortName>
        <shortName evidence="7">mtRRF</shortName>
    </recommendedName>
    <alternativeName>
        <fullName>Ribosome-releasing factor, mitochondrial</fullName>
    </alternativeName>
</protein>
<comment type="function">
    <text evidence="3 4">Responsible for the disassembly of ribosomes from messenger RNA at the termination of mitochondrial protein biosynthesis (PubMed:19716793, PubMed:33878294). Acts in collaboration with GFM2 (PubMed:33878294). Promotes mitochondrial ribosome recycling by dissolution of intersubunit contacts (PubMed:33878294).</text>
</comment>
<comment type="interaction">
    <interactant intactId="EBI-2855755">
        <id>Q96E11</id>
    </interactant>
    <interactant intactId="EBI-11522760">
        <id>Q6RW13-2</id>
        <label>AGTRAP</label>
    </interactant>
    <organismsDiffer>false</organismsDiffer>
    <experiments>3</experiments>
</comment>
<comment type="interaction">
    <interactant intactId="EBI-2855755">
        <id>Q96E11</id>
    </interactant>
    <interactant intactId="EBI-11524452">
        <id>Q8N9N5-2</id>
        <label>BANP</label>
    </interactant>
    <organismsDiffer>false</organismsDiffer>
    <experiments>3</experiments>
</comment>
<comment type="interaction">
    <interactant intactId="EBI-2855755">
        <id>Q96E11</id>
    </interactant>
    <interactant intactId="EBI-11522780">
        <id>Q96DZ9-2</id>
        <label>CMTM5</label>
    </interactant>
    <organismsDiffer>false</organismsDiffer>
    <experiments>3</experiments>
</comment>
<comment type="interaction">
    <interactant intactId="EBI-2855755">
        <id>Q96E11</id>
    </interactant>
    <interactant intactId="EBI-359002">
        <id>P11182</id>
        <label>DBT</label>
    </interactant>
    <organismsDiffer>false</organismsDiffer>
    <experiments>3</experiments>
</comment>
<comment type="interaction">
    <interactant intactId="EBI-2855755">
        <id>Q96E11</id>
    </interactant>
    <interactant intactId="EBI-10175124">
        <id>Q8IZU0</id>
        <label>FAM9B</label>
    </interactant>
    <organismsDiffer>false</organismsDiffer>
    <experiments>3</experiments>
</comment>
<comment type="interaction">
    <interactant intactId="EBI-2855755">
        <id>Q96E11</id>
    </interactant>
    <interactant intactId="EBI-741101">
        <id>Q13643</id>
        <label>FHL3</label>
    </interactant>
    <organismsDiffer>false</organismsDiffer>
    <experiments>3</experiments>
</comment>
<comment type="interaction">
    <interactant intactId="EBI-2855755">
        <id>Q96E11</id>
    </interactant>
    <interactant intactId="EBI-10171697">
        <id>Q6A162</id>
        <label>KRT40</label>
    </interactant>
    <organismsDiffer>false</organismsDiffer>
    <experiments>3</experiments>
</comment>
<comment type="interaction">
    <interactant intactId="EBI-2855755">
        <id>Q96E11</id>
    </interactant>
    <interactant intactId="EBI-9071725">
        <id>P08247</id>
        <label>SYP</label>
    </interactant>
    <organismsDiffer>false</organismsDiffer>
    <experiments>3</experiments>
</comment>
<comment type="interaction">
    <interactant intactId="EBI-2855755">
        <id>Q96E11</id>
    </interactant>
    <interactant intactId="EBI-12205107">
        <id>Q9Y4P8-4</id>
        <label>WIPI2</label>
    </interactant>
    <organismsDiffer>false</organismsDiffer>
    <experiments>3</experiments>
</comment>
<comment type="interaction">
    <interactant intactId="EBI-2855755">
        <id>Q96E11</id>
    </interactant>
    <interactant intactId="EBI-347633">
        <id>Q9H9D4</id>
        <label>ZNF408</label>
    </interactant>
    <organismsDiffer>false</organismsDiffer>
    <experiments>3</experiments>
</comment>
<comment type="subcellular location">
    <subcellularLocation>
        <location evidence="2">Mitochondrion</location>
    </subcellularLocation>
</comment>
<comment type="alternative products">
    <event type="alternative splicing"/>
    <isoform>
        <id>Q96E11-1</id>
        <name>1</name>
        <sequence type="displayed"/>
    </isoform>
    <isoform>
        <id>Q96E11-2</id>
        <name>2</name>
        <sequence type="described" ref="VSP_013489 VSP_013490"/>
    </isoform>
    <isoform>
        <id>Q96E11-3</id>
        <name>3</name>
        <sequence type="described" ref="VSP_013483"/>
    </isoform>
    <isoform>
        <id>Q96E11-4</id>
        <name>4</name>
        <sequence type="described" ref="VSP_013484"/>
    </isoform>
    <isoform>
        <id>Q96E11-5</id>
        <name>5</name>
        <sequence type="described" ref="VSP_013486 VSP_013487"/>
    </isoform>
    <isoform>
        <id>Q96E11-6</id>
        <name>6</name>
        <sequence type="described" ref="VSP_013485 VSP_013488"/>
    </isoform>
    <isoform>
        <id>Q96E11-7</id>
        <name>7</name>
        <sequence type="described" ref="VSP_013483 VSP_013485 VSP_013488"/>
    </isoform>
    <isoform>
        <id>Q96E11-8</id>
        <name>8</name>
        <sequence type="described" ref="VSP_042019"/>
    </isoform>
</comment>
<comment type="similarity">
    <text evidence="8">Belongs to the RRF family.</text>
</comment>
<accession>Q96E11</accession>
<accession>A8K6D8</accession>
<accession>A8K6Z4</accession>
<accession>B7Z4X5</accession>
<accession>B7Z6P7</accession>
<accession>Q5RKT1</accession>
<accession>Q5T7T0</accession>
<accession>Q5T7T1</accession>
<accession>Q5T7T2</accession>
<accession>Q5T7T3</accession>
<accession>Q5T7T4</accession>
<accession>Q5T7T5</accession>